<feature type="chain" id="PRO_0000168856" description="Protein YcgL">
    <location>
        <begin position="1"/>
        <end position="108"/>
    </location>
</feature>
<feature type="domain" description="YcgL" evidence="1">
    <location>
        <begin position="12"/>
        <end position="96"/>
    </location>
</feature>
<feature type="strand" evidence="2">
    <location>
        <begin position="14"/>
        <end position="19"/>
    </location>
</feature>
<feature type="strand" evidence="2">
    <location>
        <begin position="22"/>
        <end position="24"/>
    </location>
</feature>
<feature type="strand" evidence="2">
    <location>
        <begin position="26"/>
        <end position="33"/>
    </location>
</feature>
<feature type="helix" evidence="2">
    <location>
        <begin position="40"/>
        <end position="46"/>
    </location>
</feature>
<feature type="strand" evidence="2">
    <location>
        <begin position="48"/>
        <end position="55"/>
    </location>
</feature>
<feature type="strand" evidence="2">
    <location>
        <begin position="57"/>
        <end position="59"/>
    </location>
</feature>
<feature type="strand" evidence="2">
    <location>
        <begin position="64"/>
        <end position="66"/>
    </location>
</feature>
<feature type="helix" evidence="2">
    <location>
        <begin position="68"/>
        <end position="77"/>
    </location>
</feature>
<feature type="strand" evidence="2">
    <location>
        <begin position="79"/>
        <end position="83"/>
    </location>
</feature>
<evidence type="ECO:0000255" key="1">
    <source>
        <dbReference type="HAMAP-Rule" id="MF_01866"/>
    </source>
</evidence>
<evidence type="ECO:0007829" key="2">
    <source>
        <dbReference type="PDB" id="2H7A"/>
    </source>
</evidence>
<name>YCGL_ECOL6</name>
<keyword id="KW-0002">3D-structure</keyword>
<keyword id="KW-1185">Reference proteome</keyword>
<sequence>MPKPGILKSKSMFCVIYRSSKRDQTYLYVEKKDDFSRVPEELMKGFGQPQLAMILPLDGRKKLVNADIEKVKQALTEQGYYLQLPPPPEDLLKQHLSVMGQKTDDTNK</sequence>
<organism>
    <name type="scientific">Escherichia coli O6:H1 (strain CFT073 / ATCC 700928 / UPEC)</name>
    <dbReference type="NCBI Taxonomy" id="199310"/>
    <lineage>
        <taxon>Bacteria</taxon>
        <taxon>Pseudomonadati</taxon>
        <taxon>Pseudomonadota</taxon>
        <taxon>Gammaproteobacteria</taxon>
        <taxon>Enterobacterales</taxon>
        <taxon>Enterobacteriaceae</taxon>
        <taxon>Escherichia</taxon>
    </lineage>
</organism>
<proteinExistence type="evidence at protein level"/>
<gene>
    <name evidence="1" type="primary">ycgL</name>
    <name type="ordered locus">c1627</name>
</gene>
<dbReference type="EMBL" id="AE014075">
    <property type="protein sequence ID" value="AAN80092.1"/>
    <property type="molecule type" value="Genomic_DNA"/>
</dbReference>
<dbReference type="PDB" id="2H7A">
    <property type="method" value="NMR"/>
    <property type="chains" value="A=1-108"/>
</dbReference>
<dbReference type="PDBsum" id="2H7A"/>
<dbReference type="SMR" id="P0AB44"/>
<dbReference type="STRING" id="199310.c1627"/>
<dbReference type="KEGG" id="ecc:c1627"/>
<dbReference type="eggNOG" id="COG3100">
    <property type="taxonomic scope" value="Bacteria"/>
</dbReference>
<dbReference type="HOGENOM" id="CLU_155118_1_0_6"/>
<dbReference type="BioCyc" id="ECOL199310:C1627-MONOMER"/>
<dbReference type="EvolutionaryTrace" id="P0AB44"/>
<dbReference type="Proteomes" id="UP000001410">
    <property type="component" value="Chromosome"/>
</dbReference>
<dbReference type="Gene3D" id="3.10.510.20">
    <property type="entry name" value="YcgL domain"/>
    <property type="match status" value="1"/>
</dbReference>
<dbReference type="HAMAP" id="MF_01866">
    <property type="entry name" value="UPF0745"/>
    <property type="match status" value="1"/>
</dbReference>
<dbReference type="InterPro" id="IPR038068">
    <property type="entry name" value="YcgL-like_sf"/>
</dbReference>
<dbReference type="InterPro" id="IPR027354">
    <property type="entry name" value="YcgL_dom"/>
</dbReference>
<dbReference type="PANTHER" id="PTHR38109">
    <property type="entry name" value="PROTEIN YCGL"/>
    <property type="match status" value="1"/>
</dbReference>
<dbReference type="PANTHER" id="PTHR38109:SF1">
    <property type="entry name" value="PROTEIN YCGL"/>
    <property type="match status" value="1"/>
</dbReference>
<dbReference type="Pfam" id="PF05166">
    <property type="entry name" value="YcgL"/>
    <property type="match status" value="1"/>
</dbReference>
<dbReference type="SUPFAM" id="SSF160191">
    <property type="entry name" value="YcgL-like"/>
    <property type="match status" value="1"/>
</dbReference>
<dbReference type="PROSITE" id="PS51648">
    <property type="entry name" value="YCGL"/>
    <property type="match status" value="1"/>
</dbReference>
<protein>
    <recommendedName>
        <fullName evidence="1">Protein YcgL</fullName>
    </recommendedName>
</protein>
<reference key="1">
    <citation type="journal article" date="2002" name="Proc. Natl. Acad. Sci. U.S.A.">
        <title>Extensive mosaic structure revealed by the complete genome sequence of uropathogenic Escherichia coli.</title>
        <authorList>
            <person name="Welch R.A."/>
            <person name="Burland V."/>
            <person name="Plunkett G. III"/>
            <person name="Redford P."/>
            <person name="Roesch P."/>
            <person name="Rasko D."/>
            <person name="Buckles E.L."/>
            <person name="Liou S.-R."/>
            <person name="Boutin A."/>
            <person name="Hackett J."/>
            <person name="Stroud D."/>
            <person name="Mayhew G.F."/>
            <person name="Rose D.J."/>
            <person name="Zhou S."/>
            <person name="Schwartz D.C."/>
            <person name="Perna N.T."/>
            <person name="Mobley H.L.T."/>
            <person name="Donnenberg M.S."/>
            <person name="Blattner F.R."/>
        </authorList>
    </citation>
    <scope>NUCLEOTIDE SEQUENCE [LARGE SCALE GENOMIC DNA]</scope>
    <source>
        <strain>CFT073 / ATCC 700928 / UPEC</strain>
    </source>
</reference>
<reference key="2">
    <citation type="journal article" date="2007" name="Proteins">
        <title>NMR structure of YcgL, a conserved protein from Escherichia coli representing the DUF709 family, with a novel alpha/beta/alpha sandwich fold.</title>
        <authorList>
            <person name="Minailiuc O.M."/>
            <person name="Vavelyuk O."/>
            <person name="Gandhi S."/>
            <person name="Hung M.-N."/>
            <person name="Cygler M."/>
            <person name="Ekiel I."/>
        </authorList>
    </citation>
    <scope>STRUCTURE BY NMR</scope>
    <source>
        <strain>CFT073 / ATCC 700928 / UPEC</strain>
    </source>
</reference>
<accession>P0AB44</accession>
<accession>P76003</accession>